<accession>P84331</accession>
<dbReference type="SMR" id="P84331"/>
<dbReference type="GO" id="GO:0005537">
    <property type="term" value="F:D-mannose binding"/>
    <property type="evidence" value="ECO:0007669"/>
    <property type="project" value="UniProtKB-KW"/>
</dbReference>
<dbReference type="Gene3D" id="2.40.128.450">
    <property type="match status" value="2"/>
</dbReference>
<dbReference type="InterPro" id="IPR053726">
    <property type="entry name" value="Bacterial_Lectin_Domain_sf"/>
</dbReference>
<dbReference type="InterPro" id="IPR040964">
    <property type="entry name" value="SBD"/>
</dbReference>
<dbReference type="Pfam" id="PF17882">
    <property type="entry name" value="SBD"/>
    <property type="match status" value="4"/>
</dbReference>
<keyword id="KW-0903">Direct protein sequencing</keyword>
<keyword id="KW-0348">Hemagglutinin</keyword>
<keyword id="KW-0430">Lectin</keyword>
<keyword id="KW-0465">Mannose-binding</keyword>
<keyword id="KW-0677">Repeat</keyword>
<proteinExistence type="evidence at protein level"/>
<evidence type="ECO:0000269" key="1">
    <source>
    </source>
</evidence>
<evidence type="ECO:0000269" key="2">
    <source ref="2"/>
</evidence>
<evidence type="ECO:0000305" key="3"/>
<reference evidence="3" key="1">
    <citation type="journal article" date="2007" name="Glycobiology">
        <title>Strict specificity for high-mannose type N-glycans and primary structure of a red alga Eucheuma serra lectin.</title>
        <authorList>
            <person name="Hori K."/>
            <person name="Sato Y."/>
            <person name="Ito K."/>
            <person name="Fujiwara Y."/>
            <person name="Iwamoto Y."/>
            <person name="Makino H."/>
            <person name="Kawakubo A."/>
        </authorList>
    </citation>
    <scope>PROTEIN SEQUENCE</scope>
    <scope>FUNCTION</scope>
    <scope>MASS SPECTROMETRY</scope>
</reference>
<reference evidence="3" key="2">
    <citation type="journal article" date="1997" name="J. Appl. Phycol.">
        <title>The marine red alga Eucheuma serra J. Agardh, a high yielding source of two isolectins.</title>
        <authorList>
            <person name="Kawakubo A."/>
            <person name="Makino H."/>
            <person name="Ohnishi J."/>
            <person name="Hirohara H."/>
            <person name="Hori K."/>
        </authorList>
    </citation>
    <scope>FUNCTION</scope>
    <scope>BIOPHYSICOCHEMICAL PROPERTIES</scope>
    <scope>SUBUNIT</scope>
</reference>
<comment type="function">
    <text evidence="1 2">Lectin specific for high mannose N-glycans, recognizes the branched moiety of these glycans. Does not recognize other types of N-glycans or monosaccharides. Agglutinates trypsin-treated sheep and rabbit erythrocytes and untreated sheep erythrocytes. Has mitogenic activity on mouse lymphocytes. Does not require metal ions for activity.</text>
</comment>
<comment type="biophysicochemical properties">
    <phDependence>
        <text evidence="2">Stable over a wide pH range, activity is unaffected after incubation at pH 2.5-10.5.</text>
    </phDependence>
    <temperatureDependence>
        <text evidence="2">Activity is unaffected by heating at 60 degrees Celsius for 1 hour. Activity gradually decreases after incubation at higher temperatures.</text>
    </temperatureDependence>
</comment>
<comment type="subunit">
    <text evidence="2">Monomer.</text>
</comment>
<comment type="mass spectrometry" mass="27949.0" method="Electrospray" evidence="1"/>
<comment type="similarity">
    <text evidence="3">Belongs to the bacterial lectin family.</text>
</comment>
<sequence length="268" mass="27950">GRYTVQNQWGGSSAPWNDAGLWILGSRGNQNVMAVDVNSSDGGANLNGTMTYSGEGPIGFKGARRGESNVYDVENQWGGSSAPWHAGGQFVIGSRSGQGVLAVNITSSDGGKTLTGTMTYEREGPIGFKGTQSGGDTYNVENQWGGSSAPWNKAGIWALGDRSGQAMIAMDVSSSDGGKTLEGTMQYKGEGPIGFRGKLSGANNYSVENQWGGSSAPWNAAGDWLIGDRHNQNITAVKVSSDNDGKNLDGTCTYEREGPIGFKGVATS</sequence>
<organism>
    <name type="scientific">Eucheuma serra</name>
    <name type="common">Marine red alga</name>
    <name type="synonym">Sphaerococcus serra</name>
    <dbReference type="NCBI Taxonomy" id="38516"/>
    <lineage>
        <taxon>Eukaryota</taxon>
        <taxon>Rhodophyta</taxon>
        <taxon>Florideophyceae</taxon>
        <taxon>Rhodymeniophycidae</taxon>
        <taxon>Gigartinales</taxon>
        <taxon>Solieriaceae</taxon>
        <taxon>Eucheuma</taxon>
    </lineage>
</organism>
<feature type="chain" id="PRO_0000282940" description="Lectin ESA-2">
    <location>
        <begin position="1"/>
        <end position="268"/>
    </location>
</feature>
<feature type="repeat" description="1" evidence="1">
    <location>
        <begin position="1"/>
        <end position="67"/>
    </location>
</feature>
<feature type="repeat" description="2" evidence="1">
    <location>
        <begin position="68"/>
        <end position="135"/>
    </location>
</feature>
<feature type="repeat" description="3" evidence="1">
    <location>
        <begin position="136"/>
        <end position="202"/>
    </location>
</feature>
<feature type="repeat" description="4" evidence="1">
    <location>
        <begin position="203"/>
        <end position="268"/>
    </location>
</feature>
<feature type="region of interest" description="4 X approximate tandem repeats" evidence="1">
    <location>
        <begin position="1"/>
        <end position="268"/>
    </location>
</feature>
<protein>
    <recommendedName>
        <fullName>Lectin ESA-2</fullName>
    </recommendedName>
</protein>
<name>LEC1_EUCSE</name>